<dbReference type="EMBL" id="M86442">
    <property type="protein sequence ID" value="AAA28304.1"/>
    <property type="molecule type" value="mRNA"/>
</dbReference>
<dbReference type="EMBL" id="AE014134">
    <property type="protein sequence ID" value="AAF52650.2"/>
    <property type="molecule type" value="Genomic_DNA"/>
</dbReference>
<dbReference type="EMBL" id="AE014134">
    <property type="protein sequence ID" value="AAZ66587.1"/>
    <property type="molecule type" value="Genomic_DNA"/>
</dbReference>
<dbReference type="EMBL" id="BT021405">
    <property type="protein sequence ID" value="AAX33553.1"/>
    <property type="status" value="ALT_SEQ"/>
    <property type="molecule type" value="mRNA"/>
</dbReference>
<dbReference type="PIR" id="A43767">
    <property type="entry name" value="A43767"/>
</dbReference>
<dbReference type="RefSeq" id="NP_001027225.1">
    <property type="nucleotide sequence ID" value="NM_001032054.3"/>
</dbReference>
<dbReference type="RefSeq" id="NP_001027226.1">
    <property type="nucleotide sequence ID" value="NM_001032055.3"/>
</dbReference>
<dbReference type="RefSeq" id="NP_001027227.1">
    <property type="nucleotide sequence ID" value="NM_001032056.3"/>
</dbReference>
<dbReference type="SMR" id="P36179"/>
<dbReference type="BioGRID" id="77789">
    <property type="interactions" value="87"/>
</dbReference>
<dbReference type="ComplexPortal" id="CPX-2237">
    <property type="entry name" value="STRIPAK complex"/>
</dbReference>
<dbReference type="ComplexPortal" id="CPX-2293">
    <property type="entry name" value="TWS-protein phosphatase 2A complex"/>
</dbReference>
<dbReference type="ComplexPortal" id="CPX-2294">
    <property type="entry name" value="WDB-protein phosphatase 2A complex"/>
</dbReference>
<dbReference type="ComplexPortal" id="CPX-2301">
    <property type="entry name" value="WRD-protein phosphatase 2A complex"/>
</dbReference>
<dbReference type="FunCoup" id="P36179">
    <property type="interactions" value="892"/>
</dbReference>
<dbReference type="IntAct" id="P36179">
    <property type="interactions" value="100"/>
</dbReference>
<dbReference type="STRING" id="7227.FBpp0308836"/>
<dbReference type="PaxDb" id="7227-FBpp0297239"/>
<dbReference type="EnsemblMetazoa" id="FBtr0005088">
    <property type="protein sequence ID" value="FBpp0099974"/>
    <property type="gene ID" value="FBgn0260439"/>
</dbReference>
<dbReference type="EnsemblMetazoa" id="FBtr0100533">
    <property type="protein sequence ID" value="FBpp0099975"/>
    <property type="gene ID" value="FBgn0260439"/>
</dbReference>
<dbReference type="EnsemblMetazoa" id="FBtr0100535">
    <property type="protein sequence ID" value="FBpp0293227"/>
    <property type="gene ID" value="FBgn0260439"/>
</dbReference>
<dbReference type="GeneID" id="2768940"/>
<dbReference type="KEGG" id="dme:Dmel_CG17291"/>
<dbReference type="AGR" id="FB:FBgn0260439"/>
<dbReference type="CTD" id="2768940"/>
<dbReference type="FlyBase" id="FBgn0260439">
    <property type="gene designation" value="Pp2A-29B"/>
</dbReference>
<dbReference type="VEuPathDB" id="VectorBase:FBgn0260439"/>
<dbReference type="eggNOG" id="KOG0211">
    <property type="taxonomic scope" value="Eukaryota"/>
</dbReference>
<dbReference type="GeneTree" id="ENSGT00950000183066"/>
<dbReference type="HOGENOM" id="CLU_015533_2_1_1"/>
<dbReference type="InParanoid" id="P36179"/>
<dbReference type="OrthoDB" id="340346at2759"/>
<dbReference type="PhylomeDB" id="P36179"/>
<dbReference type="Reactome" id="R-DME-1295596">
    <property type="pathway name" value="Spry regulation of FGF signaling"/>
</dbReference>
<dbReference type="Reactome" id="R-DME-195253">
    <property type="pathway name" value="Degradation of beta-catenin by the destruction complex"/>
</dbReference>
<dbReference type="Reactome" id="R-DME-196299">
    <property type="pathway name" value="Beta-catenin phosphorylation cascade"/>
</dbReference>
<dbReference type="Reactome" id="R-DME-198753">
    <property type="pathway name" value="ERK/MAPK targets"/>
</dbReference>
<dbReference type="Reactome" id="R-DME-202670">
    <property type="pathway name" value="ERKs are inactivated"/>
</dbReference>
<dbReference type="Reactome" id="R-DME-209155">
    <property type="pathway name" value="Phosphorylation of AXN and APC"/>
</dbReference>
<dbReference type="Reactome" id="R-DME-209190">
    <property type="pathway name" value="Phosphorylation of CI"/>
</dbReference>
<dbReference type="Reactome" id="R-DME-209214">
    <property type="pathway name" value="Phosphorylation of SMO"/>
</dbReference>
<dbReference type="Reactome" id="R-DME-209360">
    <property type="pathway name" value="Ubiquitination and proteolysis of phosphorylated CI"/>
</dbReference>
<dbReference type="Reactome" id="R-DME-209396">
    <property type="pathway name" value="Phosphorylation of ARM"/>
</dbReference>
<dbReference type="Reactome" id="R-DME-209413">
    <property type="pathway name" value="Assembly of the 'destruction complex'"/>
</dbReference>
<dbReference type="Reactome" id="R-DME-209440">
    <property type="pathway name" value="Recruitment of the 'destruction complex' to the receptor complex, the degradation of AXN and release of ARM"/>
</dbReference>
<dbReference type="Reactome" id="R-DME-209461">
    <property type="pathway name" value="Ubiquitination and degradation of phosphorylated ARM"/>
</dbReference>
<dbReference type="Reactome" id="R-DME-2995383">
    <property type="pathway name" value="Initiation of Nuclear Envelope (NE) Reformation"/>
</dbReference>
<dbReference type="Reactome" id="R-DME-389513">
    <property type="pathway name" value="Co-inhibition by CTLA4"/>
</dbReference>
<dbReference type="Reactome" id="R-DME-432553">
    <property type="pathway name" value="Phosphorylation of PER and TIM"/>
</dbReference>
<dbReference type="Reactome" id="R-DME-432620">
    <property type="pathway name" value="Dephosphorylation of PER"/>
</dbReference>
<dbReference type="Reactome" id="R-DME-432626">
    <property type="pathway name" value="Circadian Clock pathway"/>
</dbReference>
<dbReference type="Reactome" id="R-DME-5673000">
    <property type="pathway name" value="RAF activation"/>
</dbReference>
<dbReference type="Reactome" id="R-DME-5675221">
    <property type="pathway name" value="Negative regulation of MAPK pathway"/>
</dbReference>
<dbReference type="Reactome" id="R-DME-6811558">
    <property type="pathway name" value="PI5P, PP2A and IER3 Regulate PI3K/AKT Signaling"/>
</dbReference>
<dbReference type="Reactome" id="R-DME-69231">
    <property type="pathway name" value="Cyclin D associated events in G1"/>
</dbReference>
<dbReference type="Reactome" id="R-DME-69273">
    <property type="pathway name" value="Cyclin A/B1/B2 associated events during G2/M transition"/>
</dbReference>
<dbReference type="Reactome" id="R-DME-975957">
    <property type="pathway name" value="Nonsense Mediated Decay (NMD) enhanced by the Exon Junction Complex (EJC)"/>
</dbReference>
<dbReference type="Reactome" id="R-DME-9833482">
    <property type="pathway name" value="PKR-mediated signaling"/>
</dbReference>
<dbReference type="SignaLink" id="P36179"/>
<dbReference type="BioGRID-ORCS" id="2768940">
    <property type="hits" value="2 hits in 3 CRISPR screens"/>
</dbReference>
<dbReference type="GenomeRNAi" id="2768940"/>
<dbReference type="PRO" id="PR:P36179"/>
<dbReference type="Proteomes" id="UP000000803">
    <property type="component" value="Chromosome 2L"/>
</dbReference>
<dbReference type="Bgee" id="FBgn0260439">
    <property type="expression patterns" value="Expressed in indirect flight muscle cell (Drosophila) in post-embryonic organism and 216 other cell types or tissues"/>
</dbReference>
<dbReference type="ExpressionAtlas" id="P36179">
    <property type="expression patterns" value="baseline and differential"/>
</dbReference>
<dbReference type="GO" id="GO:0005814">
    <property type="term" value="C:centriole"/>
    <property type="evidence" value="ECO:0000314"/>
    <property type="project" value="FlyBase"/>
</dbReference>
<dbReference type="GO" id="GO:0000785">
    <property type="term" value="C:chromatin"/>
    <property type="evidence" value="ECO:0000314"/>
    <property type="project" value="UniProtKB"/>
</dbReference>
<dbReference type="GO" id="GO:0005737">
    <property type="term" value="C:cytoplasm"/>
    <property type="evidence" value="ECO:0000318"/>
    <property type="project" value="GO_Central"/>
</dbReference>
<dbReference type="GO" id="GO:0005829">
    <property type="term" value="C:cytosol"/>
    <property type="evidence" value="ECO:0000314"/>
    <property type="project" value="FlyBase"/>
</dbReference>
<dbReference type="GO" id="GO:0090443">
    <property type="term" value="C:FAR/SIN/STRIPAK complex"/>
    <property type="evidence" value="ECO:0000314"/>
    <property type="project" value="FlyBase"/>
</dbReference>
<dbReference type="GO" id="GO:0160232">
    <property type="term" value="C:INTAC complex"/>
    <property type="evidence" value="ECO:0000314"/>
    <property type="project" value="UniProtKB"/>
</dbReference>
<dbReference type="GO" id="GO:0005654">
    <property type="term" value="C:nucleoplasm"/>
    <property type="evidence" value="ECO:0000304"/>
    <property type="project" value="Reactome"/>
</dbReference>
<dbReference type="GO" id="GO:0005634">
    <property type="term" value="C:nucleus"/>
    <property type="evidence" value="ECO:0000314"/>
    <property type="project" value="UniProtKB"/>
</dbReference>
<dbReference type="GO" id="GO:0000159">
    <property type="term" value="C:protein phosphatase type 2A complex"/>
    <property type="evidence" value="ECO:0000250"/>
    <property type="project" value="FlyBase"/>
</dbReference>
<dbReference type="GO" id="GO:0019888">
    <property type="term" value="F:protein phosphatase regulator activity"/>
    <property type="evidence" value="ECO:0000314"/>
    <property type="project" value="UniProtKB"/>
</dbReference>
<dbReference type="GO" id="GO:0007099">
    <property type="term" value="P:centriole replication"/>
    <property type="evidence" value="ECO:0000315"/>
    <property type="project" value="FlyBase"/>
</dbReference>
<dbReference type="GO" id="GO:0007098">
    <property type="term" value="P:centrosome cycle"/>
    <property type="evidence" value="ECO:0000315"/>
    <property type="project" value="FlyBase"/>
</dbReference>
<dbReference type="GO" id="GO:0007059">
    <property type="term" value="P:chromosome segregation"/>
    <property type="evidence" value="ECO:0000315"/>
    <property type="project" value="FlyBase"/>
</dbReference>
<dbReference type="GO" id="GO:0051754">
    <property type="term" value="P:meiotic sister chromatid cohesion, centromeric"/>
    <property type="evidence" value="ECO:0000318"/>
    <property type="project" value="GO_Central"/>
</dbReference>
<dbReference type="GO" id="GO:0035331">
    <property type="term" value="P:negative regulation of hippo signaling"/>
    <property type="evidence" value="ECO:0000315"/>
    <property type="project" value="FlyBase"/>
</dbReference>
<dbReference type="GO" id="GO:0046627">
    <property type="term" value="P:negative regulation of insulin receptor signaling pathway"/>
    <property type="evidence" value="ECO:0000315"/>
    <property type="project" value="FlyBase"/>
</dbReference>
<dbReference type="GO" id="GO:0045879">
    <property type="term" value="P:negative regulation of smoothened signaling pathway"/>
    <property type="evidence" value="ECO:0000315"/>
    <property type="project" value="FlyBase"/>
</dbReference>
<dbReference type="GO" id="GO:0016239">
    <property type="term" value="P:positive regulation of macroautophagy"/>
    <property type="evidence" value="ECO:0000315"/>
    <property type="project" value="FlyBase"/>
</dbReference>
<dbReference type="GO" id="GO:0045752">
    <property type="term" value="P:positive regulation of Toll signaling pathway"/>
    <property type="evidence" value="ECO:0000316"/>
    <property type="project" value="FlyBase"/>
</dbReference>
<dbReference type="GO" id="GO:0007168">
    <property type="term" value="P:receptor guanylyl cyclase signaling pathway"/>
    <property type="evidence" value="ECO:0000316"/>
    <property type="project" value="FlyBase"/>
</dbReference>
<dbReference type="GO" id="GO:0160240">
    <property type="term" value="P:RNA polymerase II transcription initiation surveillance"/>
    <property type="evidence" value="ECO:0000314"/>
    <property type="project" value="UniProtKB"/>
</dbReference>
<dbReference type="GO" id="GO:0051225">
    <property type="term" value="P:spindle assembly"/>
    <property type="evidence" value="ECO:0000315"/>
    <property type="project" value="FlyBase"/>
</dbReference>
<dbReference type="FunFam" id="1.25.10.10:FF:000011">
    <property type="entry name" value="Serine/threonine-protein phosphatase 2A regulatory subunit A alpha isoform"/>
    <property type="match status" value="1"/>
</dbReference>
<dbReference type="Gene3D" id="1.25.10.10">
    <property type="entry name" value="Leucine-rich Repeat Variant"/>
    <property type="match status" value="1"/>
</dbReference>
<dbReference type="InterPro" id="IPR011989">
    <property type="entry name" value="ARM-like"/>
</dbReference>
<dbReference type="InterPro" id="IPR016024">
    <property type="entry name" value="ARM-type_fold"/>
</dbReference>
<dbReference type="InterPro" id="IPR000357">
    <property type="entry name" value="HEAT"/>
</dbReference>
<dbReference type="InterPro" id="IPR021133">
    <property type="entry name" value="HEAT_type_2"/>
</dbReference>
<dbReference type="InterPro" id="IPR054573">
    <property type="entry name" value="PP2A/SF3B1-like_HEAT"/>
</dbReference>
<dbReference type="InterPro" id="IPR051023">
    <property type="entry name" value="PP2A_Regulatory_Subunit_A"/>
</dbReference>
<dbReference type="PANTHER" id="PTHR10648:SF4">
    <property type="entry name" value="PROTEIN PHOSPHATASE 2 (FORMERLY 2A), REGULATORY SUBUNIT A, BETA ISOFORM-RELATED"/>
    <property type="match status" value="1"/>
</dbReference>
<dbReference type="PANTHER" id="PTHR10648">
    <property type="entry name" value="SERINE/THREONINE-PROTEIN PHOSPHATASE PP2A 65 KDA REGULATORY SUBUNIT"/>
    <property type="match status" value="1"/>
</dbReference>
<dbReference type="Pfam" id="PF02985">
    <property type="entry name" value="HEAT"/>
    <property type="match status" value="4"/>
</dbReference>
<dbReference type="Pfam" id="PF22646">
    <property type="entry name" value="PPP2R1A-like_HEAT"/>
    <property type="match status" value="1"/>
</dbReference>
<dbReference type="SUPFAM" id="SSF48371">
    <property type="entry name" value="ARM repeat"/>
    <property type="match status" value="1"/>
</dbReference>
<dbReference type="PROSITE" id="PS50077">
    <property type="entry name" value="HEAT_REPEAT"/>
    <property type="match status" value="11"/>
</dbReference>
<proteinExistence type="evidence at protein level"/>
<sequence>MAASDKSVDDSLYPIAVLIDELKNEDVQLRLNSIKKLSTIALALGEERTRSELIPFLTETIYDEDEVLLALADQLGNFTSLVGGPEFAMYLIPPLESLATVEETVVRDKAVESLRTVAAEHSAQDLEIHVVPTLQRLVSGDWFTSRTSACGLFSVCYPRVTQPVKAELRANFRKLCQDETPMVRRAAANKLGEFAKVVETEYLKSDLIPNFVQLAQDDQDSVRLLAVEACVSIAQLLPQDDVEHLVLPTLRQCASDSSWRVRYMVAEKFVDLQKAVGPEITRVDLVPAFQYLLKDAEAEVRAAVATKVKDFCANLDKVNQVQIILSSILPYVRDLVSDPNPHVKSALASVIMGLSPMLGAYQTVEQLLPLFLIQLKDECPEVRLNIISNLDCVNDVIGIQQLSQSLLPAIVELAEDSKWRVRLAIIEYMPALAGQLGQEFFDQKLRGLCMGWLNDHVYAIREAATLNMKKLVEQFGAPWAEQAIIPMILVMSRNKNYLHRMTCLFCLNVLAEVCGTDITTKLLLPTVLLLAADPVANVRFNVAKTLQKISPFLEASVIDAQVKPTLDKLNTDTDVDVKHFAAQAIAGIAAA</sequence>
<protein>
    <recommendedName>
        <fullName>Serine/threonine-protein phosphatase PP2A 65 kDa regulatory subunit</fullName>
    </recommendedName>
    <alternativeName>
        <fullName>PR65</fullName>
    </alternativeName>
    <alternativeName>
        <fullName>Protein phosphatase PP2A regulatory subunit A</fullName>
    </alternativeName>
</protein>
<name>2AAA_DROME</name>
<feature type="initiator methionine" description="Removed" evidence="1">
    <location>
        <position position="1"/>
    </location>
</feature>
<feature type="chain" id="PRO_0000071408" description="Serine/threonine-protein phosphatase PP2A 65 kDa regulatory subunit">
    <location>
        <begin position="2"/>
        <end position="591"/>
    </location>
</feature>
<feature type="repeat" description="HEAT 1">
    <location>
        <begin position="10"/>
        <end position="48"/>
    </location>
</feature>
<feature type="repeat" description="HEAT 2">
    <location>
        <begin position="49"/>
        <end position="86"/>
    </location>
</feature>
<feature type="repeat" description="HEAT 3">
    <location>
        <begin position="87"/>
        <end position="125"/>
    </location>
</feature>
<feature type="repeat" description="HEAT 4">
    <location>
        <begin position="126"/>
        <end position="163"/>
    </location>
</feature>
<feature type="repeat" description="HEAT 5">
    <location>
        <begin position="164"/>
        <end position="202"/>
    </location>
</feature>
<feature type="repeat" description="HEAT 6">
    <location>
        <begin position="203"/>
        <end position="241"/>
    </location>
</feature>
<feature type="repeat" description="HEAT 7">
    <location>
        <begin position="242"/>
        <end position="280"/>
    </location>
</feature>
<feature type="repeat" description="HEAT 8">
    <location>
        <begin position="281"/>
        <end position="323"/>
    </location>
</feature>
<feature type="repeat" description="HEAT 9">
    <location>
        <begin position="324"/>
        <end position="362"/>
    </location>
</feature>
<feature type="repeat" description="HEAT 10">
    <location>
        <begin position="363"/>
        <end position="401"/>
    </location>
</feature>
<feature type="repeat" description="HEAT 11">
    <location>
        <begin position="402"/>
        <end position="440"/>
    </location>
</feature>
<feature type="repeat" description="HEAT 12">
    <location>
        <begin position="441"/>
        <end position="479"/>
    </location>
</feature>
<feature type="repeat" description="HEAT 13">
    <location>
        <begin position="480"/>
        <end position="518"/>
    </location>
</feature>
<feature type="repeat" description="HEAT 14">
    <location>
        <begin position="519"/>
        <end position="557"/>
    </location>
</feature>
<feature type="repeat" description="HEAT 15">
    <location>
        <begin position="558"/>
        <end position="591"/>
    </location>
</feature>
<feature type="modified residue" description="N-acetylalanine" evidence="1">
    <location>
        <position position="2"/>
    </location>
</feature>
<feature type="sequence conflict" description="In Ref. 1; AAA28304." evidence="8" ref="1">
    <original>S</original>
    <variation>T</variation>
    <location>
        <position position="232"/>
    </location>
</feature>
<organism>
    <name type="scientific">Drosophila melanogaster</name>
    <name type="common">Fruit fly</name>
    <dbReference type="NCBI Taxonomy" id="7227"/>
    <lineage>
        <taxon>Eukaryota</taxon>
        <taxon>Metazoa</taxon>
        <taxon>Ecdysozoa</taxon>
        <taxon>Arthropoda</taxon>
        <taxon>Hexapoda</taxon>
        <taxon>Insecta</taxon>
        <taxon>Pterygota</taxon>
        <taxon>Neoptera</taxon>
        <taxon>Endopterygota</taxon>
        <taxon>Diptera</taxon>
        <taxon>Brachycera</taxon>
        <taxon>Muscomorpha</taxon>
        <taxon>Ephydroidea</taxon>
        <taxon>Drosophilidae</taxon>
        <taxon>Drosophila</taxon>
        <taxon>Sophophora</taxon>
    </lineage>
</organism>
<comment type="function">
    <text evidence="2 4">The PR65 subunit of protein phosphatase 2A serves as a scaffolding molecule to coordinate the assembly of the catalytic subunit and a variable regulatory B subunit (By similarity). Key mediator of a quality checkpoint during transcription elongation as part of the Integrator-PP2A (INTAC) complex (PubMed:32966759). The INTAC complex drives premature transcription termination of transcripts that are unfavorably configured for transcriptional elongation: within the INTAC complex, acts as a scaffolding subunit for mts/PP2A, which catalyzes dephosphorylation of the C-terminal domain (CTD) of Pol II subunit POLR2A/RPB1 and Spt5, thereby preventing transcriptional elongation (PubMed:32966759).</text>
</comment>
<comment type="subunit">
    <text evidence="2 4 5 6 7">PP2A exists in several trimeric forms, all of which consist of a core composed of a catalytic subunit associated with a 65 kDa regulatory subunit (PR65) (subunit A) (By similarity). The core complex associates with a third, variable subunit (subunit B), which confers distinct properties to the holoenzyme (By similarity). Interacts with the inorganic phosphate transporter PXo (CG10483) (PubMed:37138087). Component of the Integrator-PP2A (INTAC) complex, composed of the Integrator core complex and protein phosphatase 2A subunits mts/PP2A and Pp2A-29B (PubMed:32966759, PubMed:37995689, PubMed:39032490).</text>
</comment>
<comment type="interaction">
    <interactant intactId="EBI-139308">
        <id>P36179</id>
    </interactant>
    <interactant intactId="EBI-103072">
        <id>Q9VB23</id>
        <label>wdb</label>
    </interactant>
    <organismsDiffer>false</organismsDiffer>
    <experiments>3</experiments>
</comment>
<comment type="subcellular location">
    <subcellularLocation>
        <location evidence="7">Nucleus</location>
    </subcellularLocation>
</comment>
<comment type="tissue specificity">
    <text evidence="3">Expression varies in tissues throughout development. Highly distributed expression in early embryos. In late embryonal development, found at high levels in nervous system and gonads. In third instar larvae, found in brain, imaginal disks and salivary glands.</text>
</comment>
<comment type="developmental stage">
    <text evidence="3">Expressed both maternally and zygotically. Expressed at lower levels in larvae and adult.</text>
</comment>
<comment type="domain">
    <text>Each HEAT repeat appears to consist of two alpha helices joined by a hydrophilic region, the intrarepeat loop. The repeat units may be arranged laterally to form a rod-like structure.</text>
</comment>
<comment type="similarity">
    <text evidence="8">Belongs to the phosphatase 2A regulatory subunit A family.</text>
</comment>
<comment type="sequence caution" evidence="8">
    <conflict type="miscellaneous discrepancy">
        <sequence resource="EMBL-CDS" id="AAX33553"/>
    </conflict>
    <text>Intron retention.</text>
</comment>
<reference key="1">
    <citation type="journal article" date="1992" name="Mol. Biol. Cell">
        <title>Molecular cloning and developmental expression of the catalytic and 65-kDa regulatory subunits of protein phosphatase 2A in Drosophila.</title>
        <authorList>
            <person name="Mayer-Jaekel R.E."/>
            <person name="Baumgartner S."/>
            <person name="Bilbe G."/>
            <person name="Ohkura H."/>
            <person name="Glover D.M."/>
            <person name="Hemmings B.A."/>
        </authorList>
    </citation>
    <scope>NUCLEOTIDE SEQUENCE [MRNA]</scope>
    <scope>TISSUE SPECIFICITY</scope>
    <scope>DEVELOPMENTAL STAGE</scope>
    <source>
        <tissue>Embryo</tissue>
    </source>
</reference>
<reference key="2">
    <citation type="journal article" date="2000" name="Science">
        <title>The genome sequence of Drosophila melanogaster.</title>
        <authorList>
            <person name="Adams M.D."/>
            <person name="Celniker S.E."/>
            <person name="Holt R.A."/>
            <person name="Evans C.A."/>
            <person name="Gocayne J.D."/>
            <person name="Amanatides P.G."/>
            <person name="Scherer S.E."/>
            <person name="Li P.W."/>
            <person name="Hoskins R.A."/>
            <person name="Galle R.F."/>
            <person name="George R.A."/>
            <person name="Lewis S.E."/>
            <person name="Richards S."/>
            <person name="Ashburner M."/>
            <person name="Henderson S.N."/>
            <person name="Sutton G.G."/>
            <person name="Wortman J.R."/>
            <person name="Yandell M.D."/>
            <person name="Zhang Q."/>
            <person name="Chen L.X."/>
            <person name="Brandon R.C."/>
            <person name="Rogers Y.-H.C."/>
            <person name="Blazej R.G."/>
            <person name="Champe M."/>
            <person name="Pfeiffer B.D."/>
            <person name="Wan K.H."/>
            <person name="Doyle C."/>
            <person name="Baxter E.G."/>
            <person name="Helt G."/>
            <person name="Nelson C.R."/>
            <person name="Miklos G.L.G."/>
            <person name="Abril J.F."/>
            <person name="Agbayani A."/>
            <person name="An H.-J."/>
            <person name="Andrews-Pfannkoch C."/>
            <person name="Baldwin D."/>
            <person name="Ballew R.M."/>
            <person name="Basu A."/>
            <person name="Baxendale J."/>
            <person name="Bayraktaroglu L."/>
            <person name="Beasley E.M."/>
            <person name="Beeson K.Y."/>
            <person name="Benos P.V."/>
            <person name="Berman B.P."/>
            <person name="Bhandari D."/>
            <person name="Bolshakov S."/>
            <person name="Borkova D."/>
            <person name="Botchan M.R."/>
            <person name="Bouck J."/>
            <person name="Brokstein P."/>
            <person name="Brottier P."/>
            <person name="Burtis K.C."/>
            <person name="Busam D.A."/>
            <person name="Butler H."/>
            <person name="Cadieu E."/>
            <person name="Center A."/>
            <person name="Chandra I."/>
            <person name="Cherry J.M."/>
            <person name="Cawley S."/>
            <person name="Dahlke C."/>
            <person name="Davenport L.B."/>
            <person name="Davies P."/>
            <person name="de Pablos B."/>
            <person name="Delcher A."/>
            <person name="Deng Z."/>
            <person name="Mays A.D."/>
            <person name="Dew I."/>
            <person name="Dietz S.M."/>
            <person name="Dodson K."/>
            <person name="Doup L.E."/>
            <person name="Downes M."/>
            <person name="Dugan-Rocha S."/>
            <person name="Dunkov B.C."/>
            <person name="Dunn P."/>
            <person name="Durbin K.J."/>
            <person name="Evangelista C.C."/>
            <person name="Ferraz C."/>
            <person name="Ferriera S."/>
            <person name="Fleischmann W."/>
            <person name="Fosler C."/>
            <person name="Gabrielian A.E."/>
            <person name="Garg N.S."/>
            <person name="Gelbart W.M."/>
            <person name="Glasser K."/>
            <person name="Glodek A."/>
            <person name="Gong F."/>
            <person name="Gorrell J.H."/>
            <person name="Gu Z."/>
            <person name="Guan P."/>
            <person name="Harris M."/>
            <person name="Harris N.L."/>
            <person name="Harvey D.A."/>
            <person name="Heiman T.J."/>
            <person name="Hernandez J.R."/>
            <person name="Houck J."/>
            <person name="Hostin D."/>
            <person name="Houston K.A."/>
            <person name="Howland T.J."/>
            <person name="Wei M.-H."/>
            <person name="Ibegwam C."/>
            <person name="Jalali M."/>
            <person name="Kalush F."/>
            <person name="Karpen G.H."/>
            <person name="Ke Z."/>
            <person name="Kennison J.A."/>
            <person name="Ketchum K.A."/>
            <person name="Kimmel B.E."/>
            <person name="Kodira C.D."/>
            <person name="Kraft C.L."/>
            <person name="Kravitz S."/>
            <person name="Kulp D."/>
            <person name="Lai Z."/>
            <person name="Lasko P."/>
            <person name="Lei Y."/>
            <person name="Levitsky A.A."/>
            <person name="Li J.H."/>
            <person name="Li Z."/>
            <person name="Liang Y."/>
            <person name="Lin X."/>
            <person name="Liu X."/>
            <person name="Mattei B."/>
            <person name="McIntosh T.C."/>
            <person name="McLeod M.P."/>
            <person name="McPherson D."/>
            <person name="Merkulov G."/>
            <person name="Milshina N.V."/>
            <person name="Mobarry C."/>
            <person name="Morris J."/>
            <person name="Moshrefi A."/>
            <person name="Mount S.M."/>
            <person name="Moy M."/>
            <person name="Murphy B."/>
            <person name="Murphy L."/>
            <person name="Muzny D.M."/>
            <person name="Nelson D.L."/>
            <person name="Nelson D.R."/>
            <person name="Nelson K.A."/>
            <person name="Nixon K."/>
            <person name="Nusskern D.R."/>
            <person name="Pacleb J.M."/>
            <person name="Palazzolo M."/>
            <person name="Pittman G.S."/>
            <person name="Pan S."/>
            <person name="Pollard J."/>
            <person name="Puri V."/>
            <person name="Reese M.G."/>
            <person name="Reinert K."/>
            <person name="Remington K."/>
            <person name="Saunders R.D.C."/>
            <person name="Scheeler F."/>
            <person name="Shen H."/>
            <person name="Shue B.C."/>
            <person name="Siden-Kiamos I."/>
            <person name="Simpson M."/>
            <person name="Skupski M.P."/>
            <person name="Smith T.J."/>
            <person name="Spier E."/>
            <person name="Spradling A.C."/>
            <person name="Stapleton M."/>
            <person name="Strong R."/>
            <person name="Sun E."/>
            <person name="Svirskas R."/>
            <person name="Tector C."/>
            <person name="Turner R."/>
            <person name="Venter E."/>
            <person name="Wang A.H."/>
            <person name="Wang X."/>
            <person name="Wang Z.-Y."/>
            <person name="Wassarman D.A."/>
            <person name="Weinstock G.M."/>
            <person name="Weissenbach J."/>
            <person name="Williams S.M."/>
            <person name="Woodage T."/>
            <person name="Worley K.C."/>
            <person name="Wu D."/>
            <person name="Yang S."/>
            <person name="Yao Q.A."/>
            <person name="Ye J."/>
            <person name="Yeh R.-F."/>
            <person name="Zaveri J.S."/>
            <person name="Zhan M."/>
            <person name="Zhang G."/>
            <person name="Zhao Q."/>
            <person name="Zheng L."/>
            <person name="Zheng X.H."/>
            <person name="Zhong F.N."/>
            <person name="Zhong W."/>
            <person name="Zhou X."/>
            <person name="Zhu S.C."/>
            <person name="Zhu X."/>
            <person name="Smith H.O."/>
            <person name="Gibbs R.A."/>
            <person name="Myers E.W."/>
            <person name="Rubin G.M."/>
            <person name="Venter J.C."/>
        </authorList>
    </citation>
    <scope>NUCLEOTIDE SEQUENCE [LARGE SCALE GENOMIC DNA]</scope>
    <source>
        <strain>Berkeley</strain>
    </source>
</reference>
<reference key="3">
    <citation type="journal article" date="2002" name="Genome Biol.">
        <title>Annotation of the Drosophila melanogaster euchromatic genome: a systematic review.</title>
        <authorList>
            <person name="Misra S."/>
            <person name="Crosby M.A."/>
            <person name="Mungall C.J."/>
            <person name="Matthews B.B."/>
            <person name="Campbell K.S."/>
            <person name="Hradecky P."/>
            <person name="Huang Y."/>
            <person name="Kaminker J.S."/>
            <person name="Millburn G.H."/>
            <person name="Prochnik S.E."/>
            <person name="Smith C.D."/>
            <person name="Tupy J.L."/>
            <person name="Whitfield E.J."/>
            <person name="Bayraktaroglu L."/>
            <person name="Berman B.P."/>
            <person name="Bettencourt B.R."/>
            <person name="Celniker S.E."/>
            <person name="de Grey A.D.N.J."/>
            <person name="Drysdale R.A."/>
            <person name="Harris N.L."/>
            <person name="Richter J."/>
            <person name="Russo S."/>
            <person name="Schroeder A.J."/>
            <person name="Shu S.Q."/>
            <person name="Stapleton M."/>
            <person name="Yamada C."/>
            <person name="Ashburner M."/>
            <person name="Gelbart W.M."/>
            <person name="Rubin G.M."/>
            <person name="Lewis S.E."/>
        </authorList>
    </citation>
    <scope>GENOME REANNOTATION</scope>
    <source>
        <strain>Berkeley</strain>
    </source>
</reference>
<reference key="4">
    <citation type="submission" date="2005-03" db="EMBL/GenBank/DDBJ databases">
        <authorList>
            <person name="Stapleton M."/>
            <person name="Carlson J.W."/>
            <person name="Chavez C."/>
            <person name="Frise E."/>
            <person name="George R.A."/>
            <person name="Pacleb J.M."/>
            <person name="Park S."/>
            <person name="Wan K.H."/>
            <person name="Yu C."/>
            <person name="Rubin G.M."/>
            <person name="Celniker S.E."/>
        </authorList>
    </citation>
    <scope>NUCLEOTIDE SEQUENCE [LARGE SCALE MRNA]</scope>
    <source>
        <strain>Berkeley</strain>
        <tissue>Embryo</tissue>
    </source>
</reference>
<reference key="5">
    <citation type="journal article" date="2023" name="Nature">
        <title>A phosphate-sensing organelle regulates phosphate and tissue homeostasis.</title>
        <authorList>
            <person name="Xu C."/>
            <person name="Xu J."/>
            <person name="Tang H.W."/>
            <person name="Ericsson M."/>
            <person name="Weng J.H."/>
            <person name="DiRusso J."/>
            <person name="Hu Y."/>
            <person name="Ma W."/>
            <person name="Asara J.M."/>
            <person name="Perrimon N."/>
        </authorList>
    </citation>
    <scope>INTERACTION WITH CG10483</scope>
</reference>
<reference key="6">
    <citation type="journal article" date="2020" name="Mol. Cell">
        <title>Integrator recruits protein phosphatase 2A to prevent pause release and facilitate transcription termination.</title>
        <authorList>
            <person name="Huang K.L."/>
            <person name="Jee D."/>
            <person name="Stein C.B."/>
            <person name="Elrod N.D."/>
            <person name="Henriques T."/>
            <person name="Mascibroda L.G."/>
            <person name="Baillat D."/>
            <person name="Russell W.K."/>
            <person name="Adelman K."/>
            <person name="Wagner E.J."/>
        </authorList>
    </citation>
    <scope>FUNCTION</scope>
    <scope>IDENTIFICATION IN THE INTAC COMPLEX</scope>
</reference>
<reference key="7">
    <citation type="journal article" date="2023" name="Mol. Cell">
        <title>IntS6 and the Integrator phosphatase module tune the efficiency of select premature transcription termination events.</title>
        <authorList>
            <person name="Fujiwara R."/>
            <person name="Zhai S.N."/>
            <person name="Liang D."/>
            <person name="Shah A.P."/>
            <person name="Tracey M."/>
            <person name="Ma X.K."/>
            <person name="Fields C.J."/>
            <person name="Mendoza-Figueroa M.S."/>
            <person name="Meline M.C."/>
            <person name="Tatomer D.C."/>
            <person name="Yang L."/>
            <person name="Wilusz J.E."/>
        </authorList>
    </citation>
    <scope>IDENTIFICATION IN THE INTAC COMPLEX</scope>
</reference>
<reference key="8">
    <citation type="journal article" date="2024" name="Mol. Cell">
        <title>Cytoplasmic binding partners of the Integrator endonuclease INTS11 and its paralog CPSF73 are required for their nuclear function.</title>
        <authorList>
            <person name="Lin M.H."/>
            <person name="Jensen M.K."/>
            <person name="Elrod N.D."/>
            <person name="Chu H.F."/>
            <person name="Haseley M."/>
            <person name="Beam A.C."/>
            <person name="Huang K.L."/>
            <person name="Chiang W."/>
            <person name="Russell W.K."/>
            <person name="Williams K."/>
            <person name="Proschel C."/>
            <person name="Wagner E.J."/>
            <person name="Tong L."/>
        </authorList>
    </citation>
    <scope>IDENTIFICATION IN THE INTAC COMPLEX</scope>
    <scope>SUBCELLULAR LOCATION</scope>
</reference>
<keyword id="KW-0007">Acetylation</keyword>
<keyword id="KW-0539">Nucleus</keyword>
<keyword id="KW-1185">Reference proteome</keyword>
<keyword id="KW-0677">Repeat</keyword>
<evidence type="ECO:0000250" key="1"/>
<evidence type="ECO:0000250" key="2">
    <source>
        <dbReference type="UniProtKB" id="P30153"/>
    </source>
</evidence>
<evidence type="ECO:0000269" key="3">
    <source>
    </source>
</evidence>
<evidence type="ECO:0000269" key="4">
    <source>
    </source>
</evidence>
<evidence type="ECO:0000269" key="5">
    <source>
    </source>
</evidence>
<evidence type="ECO:0000269" key="6">
    <source>
    </source>
</evidence>
<evidence type="ECO:0000269" key="7">
    <source>
    </source>
</evidence>
<evidence type="ECO:0000305" key="8"/>
<accession>P36179</accession>
<accession>A4V0F7</accession>
<accession>Q2MGK6</accession>
<accession>Q5BI19</accession>
<accession>Q9VLN3</accession>
<gene>
    <name type="primary">Pp2A-29B</name>
    <name type="ORF">CG17291</name>
</gene>